<feature type="chain" id="PRO_0000343535" description="Uncharacterized protein C126.13c">
    <location>
        <begin position="1"/>
        <end position="145"/>
    </location>
</feature>
<sequence>MDIRESRSQSPELSQSEDAVGPCPFLISVYHQFQTKNHVLDIFEDVIPSIQVYGWLTMTLYELGVLIADQLLLNNEETRHSEWSLQIRTIFYDKYKDRPIARDLGTVCLHNPKLFQGNKLLKRTGIKCGDKIDVTIKEDKIRIKK</sequence>
<name>YQFD_SCHPO</name>
<keyword id="KW-0963">Cytoplasm</keyword>
<keyword id="KW-0539">Nucleus</keyword>
<keyword id="KW-1185">Reference proteome</keyword>
<proteinExistence type="inferred from homology"/>
<comment type="subcellular location">
    <subcellularLocation>
        <location evidence="1">Cytoplasm</location>
    </subcellularLocation>
    <subcellularLocation>
        <location evidence="1">Nucleus</location>
    </subcellularLocation>
</comment>
<comment type="similarity">
    <text evidence="2">Belongs to the SAP18 family.</text>
</comment>
<evidence type="ECO:0000269" key="1">
    <source>
    </source>
</evidence>
<evidence type="ECO:0000305" key="2"/>
<reference key="1">
    <citation type="journal article" date="2002" name="Nature">
        <title>The genome sequence of Schizosaccharomyces pombe.</title>
        <authorList>
            <person name="Wood V."/>
            <person name="Gwilliam R."/>
            <person name="Rajandream M.A."/>
            <person name="Lyne M.H."/>
            <person name="Lyne R."/>
            <person name="Stewart A."/>
            <person name="Sgouros J.G."/>
            <person name="Peat N."/>
            <person name="Hayles J."/>
            <person name="Baker S.G."/>
            <person name="Basham D."/>
            <person name="Bowman S."/>
            <person name="Brooks K."/>
            <person name="Brown D."/>
            <person name="Brown S."/>
            <person name="Chillingworth T."/>
            <person name="Churcher C.M."/>
            <person name="Collins M."/>
            <person name="Connor R."/>
            <person name="Cronin A."/>
            <person name="Davis P."/>
            <person name="Feltwell T."/>
            <person name="Fraser A."/>
            <person name="Gentles S."/>
            <person name="Goble A."/>
            <person name="Hamlin N."/>
            <person name="Harris D.E."/>
            <person name="Hidalgo J."/>
            <person name="Hodgson G."/>
            <person name="Holroyd S."/>
            <person name="Hornsby T."/>
            <person name="Howarth S."/>
            <person name="Huckle E.J."/>
            <person name="Hunt S."/>
            <person name="Jagels K."/>
            <person name="James K.D."/>
            <person name="Jones L."/>
            <person name="Jones M."/>
            <person name="Leather S."/>
            <person name="McDonald S."/>
            <person name="McLean J."/>
            <person name="Mooney P."/>
            <person name="Moule S."/>
            <person name="Mungall K.L."/>
            <person name="Murphy L.D."/>
            <person name="Niblett D."/>
            <person name="Odell C."/>
            <person name="Oliver K."/>
            <person name="O'Neil S."/>
            <person name="Pearson D."/>
            <person name="Quail M.A."/>
            <person name="Rabbinowitsch E."/>
            <person name="Rutherford K.M."/>
            <person name="Rutter S."/>
            <person name="Saunders D."/>
            <person name="Seeger K."/>
            <person name="Sharp S."/>
            <person name="Skelton J."/>
            <person name="Simmonds M.N."/>
            <person name="Squares R."/>
            <person name="Squares S."/>
            <person name="Stevens K."/>
            <person name="Taylor K."/>
            <person name="Taylor R.G."/>
            <person name="Tivey A."/>
            <person name="Walsh S.V."/>
            <person name="Warren T."/>
            <person name="Whitehead S."/>
            <person name="Woodward J.R."/>
            <person name="Volckaert G."/>
            <person name="Aert R."/>
            <person name="Robben J."/>
            <person name="Grymonprez B."/>
            <person name="Weltjens I."/>
            <person name="Vanstreels E."/>
            <person name="Rieger M."/>
            <person name="Schaefer M."/>
            <person name="Mueller-Auer S."/>
            <person name="Gabel C."/>
            <person name="Fuchs M."/>
            <person name="Duesterhoeft A."/>
            <person name="Fritzc C."/>
            <person name="Holzer E."/>
            <person name="Moestl D."/>
            <person name="Hilbert H."/>
            <person name="Borzym K."/>
            <person name="Langer I."/>
            <person name="Beck A."/>
            <person name="Lehrach H."/>
            <person name="Reinhardt R."/>
            <person name="Pohl T.M."/>
            <person name="Eger P."/>
            <person name="Zimmermann W."/>
            <person name="Wedler H."/>
            <person name="Wambutt R."/>
            <person name="Purnelle B."/>
            <person name="Goffeau A."/>
            <person name="Cadieu E."/>
            <person name="Dreano S."/>
            <person name="Gloux S."/>
            <person name="Lelaure V."/>
            <person name="Mottier S."/>
            <person name="Galibert F."/>
            <person name="Aves S.J."/>
            <person name="Xiang Z."/>
            <person name="Hunt C."/>
            <person name="Moore K."/>
            <person name="Hurst S.M."/>
            <person name="Lucas M."/>
            <person name="Rochet M."/>
            <person name="Gaillardin C."/>
            <person name="Tallada V.A."/>
            <person name="Garzon A."/>
            <person name="Thode G."/>
            <person name="Daga R.R."/>
            <person name="Cruzado L."/>
            <person name="Jimenez J."/>
            <person name="Sanchez M."/>
            <person name="del Rey F."/>
            <person name="Benito J."/>
            <person name="Dominguez A."/>
            <person name="Revuelta J.L."/>
            <person name="Moreno S."/>
            <person name="Armstrong J."/>
            <person name="Forsburg S.L."/>
            <person name="Cerutti L."/>
            <person name="Lowe T."/>
            <person name="McCombie W.R."/>
            <person name="Paulsen I."/>
            <person name="Potashkin J."/>
            <person name="Shpakovski G.V."/>
            <person name="Ussery D."/>
            <person name="Barrell B.G."/>
            <person name="Nurse P."/>
        </authorList>
    </citation>
    <scope>NUCLEOTIDE SEQUENCE [LARGE SCALE GENOMIC DNA]</scope>
    <source>
        <strain>972 / ATCC 24843</strain>
    </source>
</reference>
<reference key="2">
    <citation type="journal article" date="2006" name="Nat. Biotechnol.">
        <title>ORFeome cloning and global analysis of protein localization in the fission yeast Schizosaccharomyces pombe.</title>
        <authorList>
            <person name="Matsuyama A."/>
            <person name="Arai R."/>
            <person name="Yashiroda Y."/>
            <person name="Shirai A."/>
            <person name="Kamata A."/>
            <person name="Sekido S."/>
            <person name="Kobayashi Y."/>
            <person name="Hashimoto A."/>
            <person name="Hamamoto M."/>
            <person name="Hiraoka Y."/>
            <person name="Horinouchi S."/>
            <person name="Yoshida M."/>
        </authorList>
    </citation>
    <scope>SUBCELLULAR LOCATION [LARGE SCALE ANALYSIS]</scope>
</reference>
<organism>
    <name type="scientific">Schizosaccharomyces pombe (strain 972 / ATCC 24843)</name>
    <name type="common">Fission yeast</name>
    <dbReference type="NCBI Taxonomy" id="284812"/>
    <lineage>
        <taxon>Eukaryota</taxon>
        <taxon>Fungi</taxon>
        <taxon>Dikarya</taxon>
        <taxon>Ascomycota</taxon>
        <taxon>Taphrinomycotina</taxon>
        <taxon>Schizosaccharomycetes</taxon>
        <taxon>Schizosaccharomycetales</taxon>
        <taxon>Schizosaccharomycetaceae</taxon>
        <taxon>Schizosaccharomyces</taxon>
    </lineage>
</organism>
<protein>
    <recommendedName>
        <fullName>Uncharacterized protein C126.13c</fullName>
    </recommendedName>
</protein>
<gene>
    <name type="ORF">SPCC126.13c</name>
</gene>
<dbReference type="EMBL" id="CU329672">
    <property type="protein sequence ID" value="CAA22482.1"/>
    <property type="molecule type" value="Genomic_DNA"/>
</dbReference>
<dbReference type="PIR" id="T40917">
    <property type="entry name" value="T40917"/>
</dbReference>
<dbReference type="SMR" id="O94405"/>
<dbReference type="BioGRID" id="275638">
    <property type="interactions" value="23"/>
</dbReference>
<dbReference type="FunCoup" id="O94405">
    <property type="interactions" value="361"/>
</dbReference>
<dbReference type="STRING" id="284812.O94405"/>
<dbReference type="iPTMnet" id="O94405"/>
<dbReference type="PaxDb" id="4896-SPCC126.13c.1"/>
<dbReference type="EnsemblFungi" id="SPCC126.13c.1">
    <property type="protein sequence ID" value="SPCC126.13c.1:pep"/>
    <property type="gene ID" value="SPCC126.13c"/>
</dbReference>
<dbReference type="KEGG" id="spo:2539066"/>
<dbReference type="PomBase" id="SPCC126.13c"/>
<dbReference type="VEuPathDB" id="FungiDB:SPCC126.13c"/>
<dbReference type="eggNOG" id="KOG3391">
    <property type="taxonomic scope" value="Eukaryota"/>
</dbReference>
<dbReference type="HOGENOM" id="CLU_1787944_0_0_1"/>
<dbReference type="InParanoid" id="O94405"/>
<dbReference type="OMA" id="VGPCPFL"/>
<dbReference type="Reactome" id="R-SPO-3214815">
    <property type="pathway name" value="HDACs deacetylate histones"/>
</dbReference>
<dbReference type="PRO" id="PR:O94405"/>
<dbReference type="Proteomes" id="UP000002485">
    <property type="component" value="Chromosome III"/>
</dbReference>
<dbReference type="GO" id="GO:0061574">
    <property type="term" value="C:ASAP complex"/>
    <property type="evidence" value="ECO:0000250"/>
    <property type="project" value="PomBase"/>
</dbReference>
<dbReference type="GO" id="GO:0005829">
    <property type="term" value="C:cytosol"/>
    <property type="evidence" value="ECO:0007005"/>
    <property type="project" value="PomBase"/>
</dbReference>
<dbReference type="GO" id="GO:0005634">
    <property type="term" value="C:nucleus"/>
    <property type="evidence" value="ECO:0007005"/>
    <property type="project" value="PomBase"/>
</dbReference>
<dbReference type="GO" id="GO:0045292">
    <property type="term" value="P:mRNA cis splicing, via spliceosome"/>
    <property type="evidence" value="ECO:0000303"/>
    <property type="project" value="PomBase"/>
</dbReference>
<dbReference type="Gene3D" id="3.10.20.550">
    <property type="entry name" value="ASAP complex, SAP18 subunit"/>
    <property type="match status" value="1"/>
</dbReference>
<dbReference type="InterPro" id="IPR010516">
    <property type="entry name" value="SAP18"/>
</dbReference>
<dbReference type="InterPro" id="IPR042534">
    <property type="entry name" value="SAP18_sf"/>
</dbReference>
<dbReference type="PANTHER" id="PTHR13082:SF0">
    <property type="entry name" value="HISTONE DEACETYLASE COMPLEX SUBUNIT SAP18"/>
    <property type="match status" value="1"/>
</dbReference>
<dbReference type="PANTHER" id="PTHR13082">
    <property type="entry name" value="SAP18"/>
    <property type="match status" value="1"/>
</dbReference>
<dbReference type="Pfam" id="PF06487">
    <property type="entry name" value="SAP18"/>
    <property type="match status" value="1"/>
</dbReference>
<accession>O94405</accession>